<organism>
    <name type="scientific">Streptococcus agalactiae serotype Ia (strain ATCC 27591 / A909 / CDC SS700)</name>
    <dbReference type="NCBI Taxonomy" id="205921"/>
    <lineage>
        <taxon>Bacteria</taxon>
        <taxon>Bacillati</taxon>
        <taxon>Bacillota</taxon>
        <taxon>Bacilli</taxon>
        <taxon>Lactobacillales</taxon>
        <taxon>Streptococcaceae</taxon>
        <taxon>Streptococcus</taxon>
    </lineage>
</organism>
<feature type="chain" id="PRO_0000242215" description="Peptide chain release factor 3">
    <location>
        <begin position="1"/>
        <end position="514"/>
    </location>
</feature>
<feature type="domain" description="tr-type G">
    <location>
        <begin position="8"/>
        <end position="268"/>
    </location>
</feature>
<feature type="binding site" evidence="1">
    <location>
        <begin position="17"/>
        <end position="24"/>
    </location>
    <ligand>
        <name>GTP</name>
        <dbReference type="ChEBI" id="CHEBI:37565"/>
    </ligand>
</feature>
<feature type="binding site" evidence="1">
    <location>
        <begin position="85"/>
        <end position="89"/>
    </location>
    <ligand>
        <name>GTP</name>
        <dbReference type="ChEBI" id="CHEBI:37565"/>
    </ligand>
</feature>
<feature type="binding site" evidence="1">
    <location>
        <begin position="139"/>
        <end position="142"/>
    </location>
    <ligand>
        <name>GTP</name>
        <dbReference type="ChEBI" id="CHEBI:37565"/>
    </ligand>
</feature>
<comment type="function">
    <text evidence="1">Increases the formation of ribosomal termination complexes and stimulates activities of RF-1 and RF-2. It binds guanine nucleotides and has strong preference for UGA stop codons. It may interact directly with the ribosome. The stimulation of RF-1 and RF-2 is significantly reduced by GTP and GDP, but not by GMP.</text>
</comment>
<comment type="subcellular location">
    <subcellularLocation>
        <location evidence="1">Cytoplasm</location>
    </subcellularLocation>
</comment>
<comment type="similarity">
    <text evidence="1">Belongs to the TRAFAC class translation factor GTPase superfamily. Classic translation factor GTPase family. PrfC subfamily.</text>
</comment>
<proteinExistence type="inferred from homology"/>
<accession>Q3K1T4</accession>
<dbReference type="EMBL" id="CP000114">
    <property type="protein sequence ID" value="ABA44792.1"/>
    <property type="molecule type" value="Genomic_DNA"/>
</dbReference>
<dbReference type="RefSeq" id="WP_000174832.1">
    <property type="nucleotide sequence ID" value="NC_007432.1"/>
</dbReference>
<dbReference type="SMR" id="Q3K1T4"/>
<dbReference type="KEGG" id="sak:SAK_0897"/>
<dbReference type="HOGENOM" id="CLU_002794_2_1_9"/>
<dbReference type="GO" id="GO:0005829">
    <property type="term" value="C:cytosol"/>
    <property type="evidence" value="ECO:0007669"/>
    <property type="project" value="TreeGrafter"/>
</dbReference>
<dbReference type="GO" id="GO:0005525">
    <property type="term" value="F:GTP binding"/>
    <property type="evidence" value="ECO:0007669"/>
    <property type="project" value="UniProtKB-UniRule"/>
</dbReference>
<dbReference type="GO" id="GO:0003924">
    <property type="term" value="F:GTPase activity"/>
    <property type="evidence" value="ECO:0007669"/>
    <property type="project" value="InterPro"/>
</dbReference>
<dbReference type="GO" id="GO:0016150">
    <property type="term" value="F:translation release factor activity, codon nonspecific"/>
    <property type="evidence" value="ECO:0007669"/>
    <property type="project" value="TreeGrafter"/>
</dbReference>
<dbReference type="GO" id="GO:0016149">
    <property type="term" value="F:translation release factor activity, codon specific"/>
    <property type="evidence" value="ECO:0007669"/>
    <property type="project" value="UniProtKB-UniRule"/>
</dbReference>
<dbReference type="GO" id="GO:0006449">
    <property type="term" value="P:regulation of translational termination"/>
    <property type="evidence" value="ECO:0007669"/>
    <property type="project" value="UniProtKB-UniRule"/>
</dbReference>
<dbReference type="CDD" id="cd04169">
    <property type="entry name" value="RF3"/>
    <property type="match status" value="1"/>
</dbReference>
<dbReference type="CDD" id="cd16259">
    <property type="entry name" value="RF3_III"/>
    <property type="match status" value="1"/>
</dbReference>
<dbReference type="FunFam" id="2.40.30.10:FF:000040">
    <property type="entry name" value="Peptide chain release factor 3"/>
    <property type="match status" value="1"/>
</dbReference>
<dbReference type="FunFam" id="3.30.70.3280:FF:000001">
    <property type="entry name" value="Peptide chain release factor 3"/>
    <property type="match status" value="1"/>
</dbReference>
<dbReference type="FunFam" id="3.40.50.300:FF:000542">
    <property type="entry name" value="Peptide chain release factor 3"/>
    <property type="match status" value="1"/>
</dbReference>
<dbReference type="Gene3D" id="3.40.50.300">
    <property type="entry name" value="P-loop containing nucleotide triphosphate hydrolases"/>
    <property type="match status" value="1"/>
</dbReference>
<dbReference type="Gene3D" id="3.30.70.3280">
    <property type="entry name" value="Peptide chain release factor 3, domain III"/>
    <property type="match status" value="1"/>
</dbReference>
<dbReference type="Gene3D" id="2.40.30.10">
    <property type="entry name" value="Translation factors"/>
    <property type="match status" value="1"/>
</dbReference>
<dbReference type="HAMAP" id="MF_00072">
    <property type="entry name" value="Rel_fac_3"/>
    <property type="match status" value="1"/>
</dbReference>
<dbReference type="InterPro" id="IPR053905">
    <property type="entry name" value="EF-G-like_DII"/>
</dbReference>
<dbReference type="InterPro" id="IPR035647">
    <property type="entry name" value="EFG_III/V"/>
</dbReference>
<dbReference type="InterPro" id="IPR031157">
    <property type="entry name" value="G_TR_CS"/>
</dbReference>
<dbReference type="InterPro" id="IPR027417">
    <property type="entry name" value="P-loop_NTPase"/>
</dbReference>
<dbReference type="InterPro" id="IPR004548">
    <property type="entry name" value="PrfC"/>
</dbReference>
<dbReference type="InterPro" id="IPR032090">
    <property type="entry name" value="RF3_C"/>
</dbReference>
<dbReference type="InterPro" id="IPR038467">
    <property type="entry name" value="RF3_dom_3_sf"/>
</dbReference>
<dbReference type="InterPro" id="IPR041732">
    <property type="entry name" value="RF3_GTP-bd"/>
</dbReference>
<dbReference type="InterPro" id="IPR005225">
    <property type="entry name" value="Small_GTP-bd"/>
</dbReference>
<dbReference type="InterPro" id="IPR000795">
    <property type="entry name" value="T_Tr_GTP-bd_dom"/>
</dbReference>
<dbReference type="InterPro" id="IPR009000">
    <property type="entry name" value="Transl_B-barrel_sf"/>
</dbReference>
<dbReference type="NCBIfam" id="TIGR00503">
    <property type="entry name" value="prfC"/>
    <property type="match status" value="1"/>
</dbReference>
<dbReference type="NCBIfam" id="NF001964">
    <property type="entry name" value="PRK00741.1"/>
    <property type="match status" value="1"/>
</dbReference>
<dbReference type="NCBIfam" id="TIGR00231">
    <property type="entry name" value="small_GTP"/>
    <property type="match status" value="1"/>
</dbReference>
<dbReference type="PANTHER" id="PTHR43556">
    <property type="entry name" value="PEPTIDE CHAIN RELEASE FACTOR RF3"/>
    <property type="match status" value="1"/>
</dbReference>
<dbReference type="PANTHER" id="PTHR43556:SF2">
    <property type="entry name" value="PEPTIDE CHAIN RELEASE FACTOR RF3"/>
    <property type="match status" value="1"/>
</dbReference>
<dbReference type="Pfam" id="PF22042">
    <property type="entry name" value="EF-G_D2"/>
    <property type="match status" value="1"/>
</dbReference>
<dbReference type="Pfam" id="PF00009">
    <property type="entry name" value="GTP_EFTU"/>
    <property type="match status" value="1"/>
</dbReference>
<dbReference type="Pfam" id="PF16658">
    <property type="entry name" value="RF3_C"/>
    <property type="match status" value="1"/>
</dbReference>
<dbReference type="PRINTS" id="PR00315">
    <property type="entry name" value="ELONGATNFCT"/>
</dbReference>
<dbReference type="PRINTS" id="PR01037">
    <property type="entry name" value="TCRTETOQM"/>
</dbReference>
<dbReference type="SUPFAM" id="SSF54980">
    <property type="entry name" value="EF-G C-terminal domain-like"/>
    <property type="match status" value="1"/>
</dbReference>
<dbReference type="SUPFAM" id="SSF52540">
    <property type="entry name" value="P-loop containing nucleoside triphosphate hydrolases"/>
    <property type="match status" value="1"/>
</dbReference>
<dbReference type="SUPFAM" id="SSF50447">
    <property type="entry name" value="Translation proteins"/>
    <property type="match status" value="1"/>
</dbReference>
<dbReference type="PROSITE" id="PS00301">
    <property type="entry name" value="G_TR_1"/>
    <property type="match status" value="1"/>
</dbReference>
<dbReference type="PROSITE" id="PS51722">
    <property type="entry name" value="G_TR_2"/>
    <property type="match status" value="1"/>
</dbReference>
<evidence type="ECO:0000255" key="1">
    <source>
        <dbReference type="HAMAP-Rule" id="MF_00072"/>
    </source>
</evidence>
<name>RF3_STRA1</name>
<keyword id="KW-0963">Cytoplasm</keyword>
<keyword id="KW-0342">GTP-binding</keyword>
<keyword id="KW-0547">Nucleotide-binding</keyword>
<keyword id="KW-0648">Protein biosynthesis</keyword>
<gene>
    <name evidence="1" type="primary">prfC</name>
    <name type="ordered locus">SAK_0897</name>
</gene>
<sequence>MTLQDEIKKRRTFAIISHPDAGKTTITEQLLYFGGEIREAGTVKGKKSGTFAKSDWMDIEKQRGISVTSSVMQFDYAGKRVNILDTPGHEDFSEDTYRTLMAVDAAVMVVDSAKGIEAQTKKLFEVVKHRNIPVFTFINKLDRDGREPLDLLEELEEVLGIASYPMNWPIGMGKSFEGLYDLHNKRLELYKGDERFASIEDGDQLFANNPFYEQVKEDIELLQEAGNDFSEQAILDGDLTPVFFGSALTNFGVQTFLDTFLEFAPEPHGHKTTEGNVIDPLAKDFSGFVFKIQANMDPRHRDRIAFVRIVSGEFERGMGVNLTRTGKGAKLSNVTQFMAESRENVTNAVAGDIIGVYDTGTYQVGDTLTVGKNKFEFEPLPTFTPELFMKVSAKNVMKQKSFHKGIEQLVQEGAIQLYKNYQTGEYMLGAVGQLQFEVFKHRMEGEYNAEVVMTPMGKKTVRWINSDDLDERMSSSRNILAKDRFDQPVFLFENDFALRWFADKYPDVKLEEKM</sequence>
<protein>
    <recommendedName>
        <fullName evidence="1">Peptide chain release factor 3</fullName>
        <shortName evidence="1">RF-3</shortName>
    </recommendedName>
</protein>
<reference key="1">
    <citation type="journal article" date="2005" name="Proc. Natl. Acad. Sci. U.S.A.">
        <title>Genome analysis of multiple pathogenic isolates of Streptococcus agalactiae: implications for the microbial 'pan-genome'.</title>
        <authorList>
            <person name="Tettelin H."/>
            <person name="Masignani V."/>
            <person name="Cieslewicz M.J."/>
            <person name="Donati C."/>
            <person name="Medini D."/>
            <person name="Ward N.L."/>
            <person name="Angiuoli S.V."/>
            <person name="Crabtree J."/>
            <person name="Jones A.L."/>
            <person name="Durkin A.S."/>
            <person name="DeBoy R.T."/>
            <person name="Davidsen T.M."/>
            <person name="Mora M."/>
            <person name="Scarselli M."/>
            <person name="Margarit y Ros I."/>
            <person name="Peterson J.D."/>
            <person name="Hauser C.R."/>
            <person name="Sundaram J.P."/>
            <person name="Nelson W.C."/>
            <person name="Madupu R."/>
            <person name="Brinkac L.M."/>
            <person name="Dodson R.J."/>
            <person name="Rosovitz M.J."/>
            <person name="Sullivan S.A."/>
            <person name="Daugherty S.C."/>
            <person name="Haft D.H."/>
            <person name="Selengut J."/>
            <person name="Gwinn M.L."/>
            <person name="Zhou L."/>
            <person name="Zafar N."/>
            <person name="Khouri H."/>
            <person name="Radune D."/>
            <person name="Dimitrov G."/>
            <person name="Watkins K."/>
            <person name="O'Connor K.J."/>
            <person name="Smith S."/>
            <person name="Utterback T.R."/>
            <person name="White O."/>
            <person name="Rubens C.E."/>
            <person name="Grandi G."/>
            <person name="Madoff L.C."/>
            <person name="Kasper D.L."/>
            <person name="Telford J.L."/>
            <person name="Wessels M.R."/>
            <person name="Rappuoli R."/>
            <person name="Fraser C.M."/>
        </authorList>
    </citation>
    <scope>NUCLEOTIDE SEQUENCE [LARGE SCALE GENOMIC DNA]</scope>
    <source>
        <strain>ATCC 27591 / A909 / CDC SS700</strain>
    </source>
</reference>